<protein>
    <recommendedName>
        <fullName>Pesticidal crystal protein Cry5Ac</fullName>
    </recommendedName>
    <alternativeName>
        <fullName>135 kDa crystal protein</fullName>
    </alternativeName>
    <alternativeName>
        <fullName>Crystaline entomocidal protoxin</fullName>
    </alternativeName>
    <alternativeName>
        <fullName>Insecticidal delta-endotoxin CryVA(c)</fullName>
    </alternativeName>
</protein>
<gene>
    <name type="primary">cry5Ac</name>
    <name type="synonym">cryVA(c)</name>
</gene>
<evidence type="ECO:0000256" key="1">
    <source>
        <dbReference type="SAM" id="MobiDB-lite"/>
    </source>
</evidence>
<evidence type="ECO:0000305" key="2"/>
<comment type="function">
    <text>Promotes colloidosmotic lysis by binding to the midgut epithelial cells of hymenopteran species.</text>
</comment>
<comment type="developmental stage">
    <text>The crystal protein is produced during sporulation and is accumulated both as an inclusion and as part of the spore coat.</text>
</comment>
<comment type="miscellaneous">
    <text>Toxic segment of the protein is located in the N-terminus.</text>
</comment>
<comment type="similarity">
    <text evidence="2">Belongs to the delta endotoxin family.</text>
</comment>
<name>CR5AC_BACTU</name>
<dbReference type="EMBL" id="I34543">
    <property type="status" value="NOT_ANNOTATED_CDS"/>
    <property type="molecule type" value="Unassigned_DNA"/>
</dbReference>
<dbReference type="SMR" id="P56955"/>
<dbReference type="TCDB" id="1.C.2.3.3">
    <property type="family name" value="the channel-forming Delta-endotoxin insecticidal crystal protein (icp) family"/>
</dbReference>
<dbReference type="GO" id="GO:0090729">
    <property type="term" value="F:toxin activity"/>
    <property type="evidence" value="ECO:0007669"/>
    <property type="project" value="UniProtKB-KW"/>
</dbReference>
<dbReference type="GO" id="GO:0030435">
    <property type="term" value="P:sporulation resulting in formation of a cellular spore"/>
    <property type="evidence" value="ECO:0007669"/>
    <property type="project" value="UniProtKB-KW"/>
</dbReference>
<dbReference type="GO" id="GO:0001907">
    <property type="term" value="P:symbiont-mediated killing of host cell"/>
    <property type="evidence" value="ECO:0007669"/>
    <property type="project" value="InterPro"/>
</dbReference>
<dbReference type="CDD" id="cd04085">
    <property type="entry name" value="delta_endotoxin_C"/>
    <property type="match status" value="1"/>
</dbReference>
<dbReference type="Gene3D" id="2.60.120.260">
    <property type="entry name" value="Galactose-binding domain-like"/>
    <property type="match status" value="1"/>
</dbReference>
<dbReference type="Gene3D" id="1.20.190.10">
    <property type="entry name" value="Pesticidal crystal protein, N-terminal domain"/>
    <property type="match status" value="1"/>
</dbReference>
<dbReference type="InterPro" id="IPR041587">
    <property type="entry name" value="Cry_V"/>
</dbReference>
<dbReference type="InterPro" id="IPR008979">
    <property type="entry name" value="Galactose-bd-like_sf"/>
</dbReference>
<dbReference type="InterPro" id="IPR005638">
    <property type="entry name" value="Pest_crys_dom-III"/>
</dbReference>
<dbReference type="InterPro" id="IPR005639">
    <property type="entry name" value="Pest_crys_dom_I"/>
</dbReference>
<dbReference type="InterPro" id="IPR036716">
    <property type="entry name" value="Pest_crys_N_sf"/>
</dbReference>
<dbReference type="Pfam" id="PF17997">
    <property type="entry name" value="Cry1Ac_D5"/>
    <property type="match status" value="1"/>
</dbReference>
<dbReference type="Pfam" id="PF03944">
    <property type="entry name" value="Endotoxin_C"/>
    <property type="match status" value="1"/>
</dbReference>
<dbReference type="Pfam" id="PF03945">
    <property type="entry name" value="Endotoxin_N"/>
    <property type="match status" value="1"/>
</dbReference>
<dbReference type="SUPFAM" id="SSF56849">
    <property type="entry name" value="delta-Endotoxin (insectocide), N-terminal domain"/>
    <property type="match status" value="1"/>
</dbReference>
<dbReference type="SUPFAM" id="SSF49785">
    <property type="entry name" value="Galactose-binding domain-like"/>
    <property type="match status" value="1"/>
</dbReference>
<sequence length="1220" mass="135403">MAILNELYPSVPYNVLAYTPPSFLPDAGTQATPADLTAYEQLLKNLEKGINAGTYSKAIADVLKGIFIDDTINYQTYVNIGLSLITLAVPEIGIFTPFIGLFFAALNKHDAPPPPNAKDIFEAMKPAIQEMIDRTLTADEQTFLNGEISGLQNLAARYQSTMDDIQSHGGFNKVDSGLIKKFTDEVLSLNSFYTDRLPVFITDNTADRTLLGLPYYAILASMHLMLLRDIITKGPTWDSKINFTPDAIDSFKTDIKNNIKLYSKTIYDVFQKGLASYGTPSDLESFAKKKKYIEIMTTHCLDFARLFPTFDPDLYPTGSGDISLQKTRRILSPFIPIRTADGLTLNNTSIDTSNWPNYENGNGAFPNPKERILKQFKLYPSWRAGQYGGLLQPYLWAIEVQDSVETRLYGQLPAVDPQAGPNYVSIDSSNPIIQINMDTWKTPPQGASGWNTNLMRGSVSGLSFLQRDGTRLSAGMGGGFADTIYSLPATHYLSYLYGTPYQTSDNYSGHVGALVGVSTPQEATLPNIIGQPDEQGNVSTMGFPFEKASYGGTVVKEWLNGANAMKLSPGQSIGIPITNVTKHNYQVRCRYASNSDNPVFFNVDTGGANPIFQQINFASTVDSNMGVKEENGVYVVKSIKTVEIPAGSFYVHVTNQGSSDLFLDRIEFVPKIQFQFCDNNNLHCDCNNPVDTDCTFCCVCTSLTDCDCNNPRGIDCTLCCQVENQLPSFVTLTDLRNITSQVNGLFAPGTQNRLAQNISDHDIEEVVLKVDALSDEIFGTNKKALRKLVNQAKRLSRARNLLIGGSFENWDAWYKGRNVVTVSDHELFKSDHVLLPPPGLSPSYIFQKVEESKLKANTRYTVSGFIAHATDLEIVVSRYGQEIKKVVQVPYGEAFPLTSSGPVCCIPHSTSNGTLGNPHFFSYSIDVGALDVDTNPGIEFGLRIVNPTGMARVSNLEIREDRPLAANEIRQVQRVARNWRTEYEKERAEVTSLIQPVINRINGLYENENWNGSIRSDISYQNIDAIVLPTLPTLRHWFMSDRFSEQGDIMAKFQGALNRAYAQLEQSTLLHNGHFTKDAANWTIEGDAHQITLEDGRRVLRLPDWSSSVSQMIEIENFNPDKEYNLVFHGQGEGTVTLEHGEETKYIETHTHHFANFTTSQRQGLTFESNKVTVTISSEDGEFLVDNIALVEAPLPTDDQNSEGNTAFSTNSDTSMNNNQ</sequence>
<accession>P56955</accession>
<keyword id="KW-0749">Sporulation</keyword>
<keyword id="KW-0800">Toxin</keyword>
<keyword id="KW-0843">Virulence</keyword>
<proteinExistence type="evidence at transcript level"/>
<organism>
    <name type="scientific">Bacillus thuringiensis</name>
    <dbReference type="NCBI Taxonomy" id="1428"/>
    <lineage>
        <taxon>Bacteria</taxon>
        <taxon>Bacillati</taxon>
        <taxon>Bacillota</taxon>
        <taxon>Bacilli</taxon>
        <taxon>Bacillales</taxon>
        <taxon>Bacillaceae</taxon>
        <taxon>Bacillus</taxon>
        <taxon>Bacillus cereus group</taxon>
    </lineage>
</organism>
<reference key="1">
    <citation type="patent" date="1997-01-21" number="US5596071">
        <title>Bacillus thuringiensis toxins active against hymenopteran pests.</title>
        <authorList>
            <person name="Payne J.M."/>
            <person name="Kennedy M.K."/>
            <person name="Randall J.B."/>
            <person name="Meier H."/>
            <person name="Uick H.J."/>
            <person name="Foncerrada L."/>
            <person name="Schnepf H.E."/>
            <person name="Schwab G.E."/>
            <person name="Fu J.M."/>
        </authorList>
    </citation>
    <scope>NUCLEOTIDE SEQUENCE [GENOMIC DNA]</scope>
    <source>
        <strain>NRRL B-18765 / PS86Q3</strain>
    </source>
</reference>
<feature type="chain" id="PRO_0000174068" description="Pesticidal crystal protein Cry5Ac">
    <location>
        <begin position="1"/>
        <end position="1220"/>
    </location>
</feature>
<feature type="region of interest" description="Disordered" evidence="1">
    <location>
        <begin position="1194"/>
        <end position="1220"/>
    </location>
</feature>
<feature type="compositionally biased region" description="Polar residues" evidence="1">
    <location>
        <begin position="1198"/>
        <end position="1220"/>
    </location>
</feature>